<name>ACTP1_ACTEQ</name>
<organism>
    <name type="scientific">Actinia equina</name>
    <name type="common">Beadlet anemone</name>
    <dbReference type="NCBI Taxonomy" id="6106"/>
    <lineage>
        <taxon>Eukaryota</taxon>
        <taxon>Metazoa</taxon>
        <taxon>Cnidaria</taxon>
        <taxon>Anthozoa</taxon>
        <taxon>Hexacorallia</taxon>
        <taxon>Actiniaria</taxon>
        <taxon>Actiniidae</taxon>
        <taxon>Actinia</taxon>
    </lineage>
</organism>
<proteinExistence type="evidence at protein level"/>
<accession>P0C1H0</accession>
<comment type="function">
    <text evidence="2">Pore-forming protein that forms cations-selective hydrophilic pores of around 1 nm and causes cardiac stimulation and cytolysis. Pore formation is a multi-step process that involves specific recognition of membrane sphingomyelin (but neither cholesterol nor phosphatidylcholine) using aromatic rich region and adjacent phosphocholine (POC) binding site, firm binding to the membrane (mainly driven by hydrophobic interactions) accompanied by the transfer of the N-terminal region to the lipid-water interface and finally pore formation after oligomerization of monomers. Cytolytic effects include red blood cells hemolysis, platelet aggregation and lysis, cytotoxic and cytostatic effects on fibroblasts. Lethality in mammals has been ascribed to severe vasospasm of coronary vessels, cardiac arrhythmia, and inotropic effects.</text>
</comment>
<comment type="subunit">
    <text evidence="1">Octamer or nonamer in membranes. Monomer in the soluble state.</text>
</comment>
<comment type="subcellular location">
    <subcellularLocation>
        <location evidence="1">Secreted</location>
    </subcellularLocation>
    <subcellularLocation>
        <location evidence="2">Nematocyst</location>
    </subcellularLocation>
    <subcellularLocation>
        <location evidence="1">Target cell membrane</location>
    </subcellularLocation>
    <text evidence="1">Forms an alpha-helical membrane channel in the prey.</text>
</comment>
<comment type="domain">
    <text evidence="3">Composed of a long N-terminal alpha-helix and a core region rich in beta-sheet structures. Before the pore formation, the alpha-helix binds the lipid membrane, partitions into the lipid-water interface and stabilizes the monomeric molecule on the membrane. Finally, it traverses the bilayer, thus forming the transmembrane pore.</text>
</comment>
<comment type="toxic dose">
    <text evidence="4">LD(50) is 23 ug/kg by intravenous injection into mice.</text>
</comment>
<comment type="similarity">
    <text evidence="6">Belongs to the actinoporin family. Sea anemone subfamily.</text>
</comment>
<evidence type="ECO:0000250" key="1">
    <source>
        <dbReference type="UniProtKB" id="B9W5G6"/>
    </source>
</evidence>
<evidence type="ECO:0000250" key="2">
    <source>
        <dbReference type="UniProtKB" id="P07845"/>
    </source>
</evidence>
<evidence type="ECO:0000250" key="3">
    <source>
        <dbReference type="UniProtKB" id="P61914"/>
    </source>
</evidence>
<evidence type="ECO:0000269" key="4">
    <source>
    </source>
</evidence>
<evidence type="ECO:0000303" key="5">
    <source>
    </source>
</evidence>
<evidence type="ECO:0000305" key="6"/>
<dbReference type="GO" id="GO:0005576">
    <property type="term" value="C:extracellular region"/>
    <property type="evidence" value="ECO:0007669"/>
    <property type="project" value="UniProtKB-SubCell"/>
</dbReference>
<dbReference type="GO" id="GO:0016020">
    <property type="term" value="C:membrane"/>
    <property type="evidence" value="ECO:0007669"/>
    <property type="project" value="UniProtKB-KW"/>
</dbReference>
<dbReference type="GO" id="GO:0042151">
    <property type="term" value="C:nematocyst"/>
    <property type="evidence" value="ECO:0007669"/>
    <property type="project" value="UniProtKB-SubCell"/>
</dbReference>
<dbReference type="GO" id="GO:0044218">
    <property type="term" value="C:other organism cell membrane"/>
    <property type="evidence" value="ECO:0007669"/>
    <property type="project" value="UniProtKB-KW"/>
</dbReference>
<dbReference type="GO" id="GO:0090729">
    <property type="term" value="F:toxin activity"/>
    <property type="evidence" value="ECO:0007669"/>
    <property type="project" value="UniProtKB-KW"/>
</dbReference>
<dbReference type="GO" id="GO:0031640">
    <property type="term" value="P:killing of cells of another organism"/>
    <property type="evidence" value="ECO:0007669"/>
    <property type="project" value="UniProtKB-KW"/>
</dbReference>
<dbReference type="GO" id="GO:0006811">
    <property type="term" value="P:monoatomic ion transport"/>
    <property type="evidence" value="ECO:0007669"/>
    <property type="project" value="UniProtKB-KW"/>
</dbReference>
<protein>
    <recommendedName>
        <fullName evidence="5">Equinatoxin-1</fullName>
    </recommendedName>
    <alternativeName>
        <fullName evidence="6">DELTA-actitoxin</fullName>
    </alternativeName>
    <alternativeName>
        <fullName evidence="5">Equinatoxin I'</fullName>
    </alternativeName>
</protein>
<keyword id="KW-0204">Cytolysis</keyword>
<keyword id="KW-0903">Direct protein sequencing</keyword>
<keyword id="KW-0406">Ion transport</keyword>
<keyword id="KW-0472">Membrane</keyword>
<keyword id="KW-0166">Nematocyst</keyword>
<keyword id="KW-0964">Secreted</keyword>
<keyword id="KW-1052">Target cell membrane</keyword>
<keyword id="KW-1053">Target membrane</keyword>
<keyword id="KW-0800">Toxin</keyword>
<keyword id="KW-0812">Transmembrane</keyword>
<keyword id="KW-0813">Transport</keyword>
<reference key="1">
    <citation type="journal article" date="1999" name="Toxicon">
        <title>Equinatoxins, pore-forming proteins from the sea anemone Actinia equina, belong to a multigene family.</title>
        <authorList>
            <person name="Anderluh G."/>
            <person name="Krizaj I."/>
            <person name="Strukelj B."/>
            <person name="Gubensek F."/>
            <person name="Macek P."/>
            <person name="Pungercar J."/>
        </authorList>
    </citation>
    <scope>PROTEIN SEQUENCE</scope>
</reference>
<reference key="2">
    <citation type="journal article" date="1988" name="Toxicon">
        <title>Isolation and characterization of three lethal and hemolytic toxins from the sea anemone Actinia equina L.</title>
        <authorList>
            <person name="Macek P."/>
            <person name="Lebez D."/>
        </authorList>
    </citation>
    <scope>AMINO-ACID COMPOSITION</scope>
    <scope>TOXIC DOSE</scope>
</reference>
<reference key="3">
    <citation type="journal article" date="2009" name="Toxicon">
        <title>Molecular mechanism of pore formation by actinoporins.</title>
        <authorList>
            <person name="Kristan K.C."/>
            <person name="Viero G."/>
            <person name="Dalla Serra M."/>
            <person name="Macek P."/>
            <person name="Anderluh G."/>
        </authorList>
    </citation>
    <scope>REVIEW</scope>
</reference>
<feature type="peptide" id="PRO_0000244623" description="Equinatoxin-1">
    <location>
        <begin position="1"/>
        <end position="20" status="greater than"/>
    </location>
</feature>
<feature type="region of interest" description="Plays an important role in the hemolytic activity" evidence="2">
    <location>
        <begin position="3"/>
        <end position="12"/>
    </location>
</feature>
<feature type="region of interest" description="N-terminal region" evidence="3">
    <location>
        <begin position="11"/>
        <end position="20" status="greater than"/>
    </location>
</feature>
<feature type="non-terminal residue">
    <location>
        <position position="20"/>
    </location>
</feature>
<sequence length="20" mass="1946">SVAVAGAVIEGASLTFNVLQ</sequence>